<dbReference type="EC" id="2.3.2.29" evidence="1"/>
<dbReference type="EMBL" id="CP000926">
    <property type="protein sequence ID" value="ABY99502.1"/>
    <property type="molecule type" value="Genomic_DNA"/>
</dbReference>
<dbReference type="RefSeq" id="WP_012273215.1">
    <property type="nucleotide sequence ID" value="NC_010322.1"/>
</dbReference>
<dbReference type="SMR" id="B0KLX4"/>
<dbReference type="KEGG" id="ppg:PputGB1_3611"/>
<dbReference type="eggNOG" id="COG2935">
    <property type="taxonomic scope" value="Bacteria"/>
</dbReference>
<dbReference type="HOGENOM" id="CLU_077607_0_0_6"/>
<dbReference type="Proteomes" id="UP000002157">
    <property type="component" value="Chromosome"/>
</dbReference>
<dbReference type="GO" id="GO:0005737">
    <property type="term" value="C:cytoplasm"/>
    <property type="evidence" value="ECO:0007669"/>
    <property type="project" value="UniProtKB-SubCell"/>
</dbReference>
<dbReference type="GO" id="GO:0004057">
    <property type="term" value="F:arginyl-tRNA--protein transferase activity"/>
    <property type="evidence" value="ECO:0007669"/>
    <property type="project" value="InterPro"/>
</dbReference>
<dbReference type="GO" id="GO:0008914">
    <property type="term" value="F:leucyl-tRNA--protein transferase activity"/>
    <property type="evidence" value="ECO:0007669"/>
    <property type="project" value="UniProtKB-UniRule"/>
</dbReference>
<dbReference type="GO" id="GO:0071596">
    <property type="term" value="P:ubiquitin-dependent protein catabolic process via the N-end rule pathway"/>
    <property type="evidence" value="ECO:0007669"/>
    <property type="project" value="InterPro"/>
</dbReference>
<dbReference type="HAMAP" id="MF_00689">
    <property type="entry name" value="Bpt"/>
    <property type="match status" value="1"/>
</dbReference>
<dbReference type="InterPro" id="IPR016181">
    <property type="entry name" value="Acyl_CoA_acyltransferase"/>
</dbReference>
<dbReference type="InterPro" id="IPR017138">
    <property type="entry name" value="Asp_Glu_LeuTrfase"/>
</dbReference>
<dbReference type="InterPro" id="IPR030700">
    <property type="entry name" value="N-end_Aminoacyl_Trfase"/>
</dbReference>
<dbReference type="InterPro" id="IPR007472">
    <property type="entry name" value="N-end_Aminoacyl_Trfase_C"/>
</dbReference>
<dbReference type="InterPro" id="IPR007471">
    <property type="entry name" value="N-end_Aminoacyl_Trfase_N"/>
</dbReference>
<dbReference type="NCBIfam" id="NF002341">
    <property type="entry name" value="PRK01305.1-1"/>
    <property type="match status" value="1"/>
</dbReference>
<dbReference type="NCBIfam" id="NF002342">
    <property type="entry name" value="PRK01305.1-3"/>
    <property type="match status" value="1"/>
</dbReference>
<dbReference type="NCBIfam" id="NF002345">
    <property type="entry name" value="PRK01305.2-2"/>
    <property type="match status" value="1"/>
</dbReference>
<dbReference type="NCBIfam" id="NF002346">
    <property type="entry name" value="PRK01305.2-3"/>
    <property type="match status" value="1"/>
</dbReference>
<dbReference type="PANTHER" id="PTHR21367">
    <property type="entry name" value="ARGININE-TRNA-PROTEIN TRANSFERASE 1"/>
    <property type="match status" value="1"/>
</dbReference>
<dbReference type="PANTHER" id="PTHR21367:SF1">
    <property type="entry name" value="ARGINYL-TRNA--PROTEIN TRANSFERASE 1"/>
    <property type="match status" value="1"/>
</dbReference>
<dbReference type="Pfam" id="PF04377">
    <property type="entry name" value="ATE_C"/>
    <property type="match status" value="1"/>
</dbReference>
<dbReference type="Pfam" id="PF04376">
    <property type="entry name" value="ATE_N"/>
    <property type="match status" value="1"/>
</dbReference>
<dbReference type="PIRSF" id="PIRSF037208">
    <property type="entry name" value="ATE_pro_prd"/>
    <property type="match status" value="1"/>
</dbReference>
<dbReference type="SUPFAM" id="SSF55729">
    <property type="entry name" value="Acyl-CoA N-acyltransferases (Nat)"/>
    <property type="match status" value="1"/>
</dbReference>
<accession>B0KLX4</accession>
<feature type="chain" id="PRO_1000083110" description="Aspartate/glutamate leucyltransferase">
    <location>
        <begin position="1"/>
        <end position="235"/>
    </location>
</feature>
<comment type="function">
    <text evidence="1">Functions in the N-end rule pathway of protein degradation where it conjugates Leu from its aminoacyl-tRNA to the N-termini of proteins containing an N-terminal aspartate or glutamate.</text>
</comment>
<comment type="catalytic activity">
    <reaction evidence="1">
        <text>N-terminal L-glutamyl-[protein] + L-leucyl-tRNA(Leu) = N-terminal L-leucyl-L-glutamyl-[protein] + tRNA(Leu) + H(+)</text>
        <dbReference type="Rhea" id="RHEA:50412"/>
        <dbReference type="Rhea" id="RHEA-COMP:9613"/>
        <dbReference type="Rhea" id="RHEA-COMP:9622"/>
        <dbReference type="Rhea" id="RHEA-COMP:12664"/>
        <dbReference type="Rhea" id="RHEA-COMP:12668"/>
        <dbReference type="ChEBI" id="CHEBI:15378"/>
        <dbReference type="ChEBI" id="CHEBI:64721"/>
        <dbReference type="ChEBI" id="CHEBI:78442"/>
        <dbReference type="ChEBI" id="CHEBI:78494"/>
        <dbReference type="ChEBI" id="CHEBI:133041"/>
        <dbReference type="EC" id="2.3.2.29"/>
    </reaction>
</comment>
<comment type="catalytic activity">
    <reaction evidence="1">
        <text>N-terminal L-aspartyl-[protein] + L-leucyl-tRNA(Leu) = N-terminal L-leucyl-L-aspartyl-[protein] + tRNA(Leu) + H(+)</text>
        <dbReference type="Rhea" id="RHEA:50420"/>
        <dbReference type="Rhea" id="RHEA-COMP:9613"/>
        <dbReference type="Rhea" id="RHEA-COMP:9622"/>
        <dbReference type="Rhea" id="RHEA-COMP:12669"/>
        <dbReference type="Rhea" id="RHEA-COMP:12674"/>
        <dbReference type="ChEBI" id="CHEBI:15378"/>
        <dbReference type="ChEBI" id="CHEBI:64720"/>
        <dbReference type="ChEBI" id="CHEBI:78442"/>
        <dbReference type="ChEBI" id="CHEBI:78494"/>
        <dbReference type="ChEBI" id="CHEBI:133042"/>
        <dbReference type="EC" id="2.3.2.29"/>
    </reaction>
</comment>
<comment type="subcellular location">
    <subcellularLocation>
        <location evidence="1">Cytoplasm</location>
    </subcellularLocation>
</comment>
<comment type="similarity">
    <text evidence="1">Belongs to the R-transferase family. Bpt subfamily.</text>
</comment>
<proteinExistence type="inferred from homology"/>
<reference key="1">
    <citation type="submission" date="2008-01" db="EMBL/GenBank/DDBJ databases">
        <title>Complete sequence of Pseudomonas putida GB-1.</title>
        <authorList>
            <consortium name="US DOE Joint Genome Institute"/>
            <person name="Copeland A."/>
            <person name="Lucas S."/>
            <person name="Lapidus A."/>
            <person name="Barry K."/>
            <person name="Glavina del Rio T."/>
            <person name="Dalin E."/>
            <person name="Tice H."/>
            <person name="Pitluck S."/>
            <person name="Bruce D."/>
            <person name="Goodwin L."/>
            <person name="Chertkov O."/>
            <person name="Brettin T."/>
            <person name="Detter J.C."/>
            <person name="Han C."/>
            <person name="Kuske C.R."/>
            <person name="Schmutz J."/>
            <person name="Larimer F."/>
            <person name="Land M."/>
            <person name="Hauser L."/>
            <person name="Kyrpides N."/>
            <person name="Kim E."/>
            <person name="McCarthy J.K."/>
            <person name="Richardson P."/>
        </authorList>
    </citation>
    <scope>NUCLEOTIDE SEQUENCE [LARGE SCALE GENOMIC DNA]</scope>
    <source>
        <strain>GB-1</strain>
    </source>
</reference>
<organism>
    <name type="scientific">Pseudomonas putida (strain GB-1)</name>
    <dbReference type="NCBI Taxonomy" id="76869"/>
    <lineage>
        <taxon>Bacteria</taxon>
        <taxon>Pseudomonadati</taxon>
        <taxon>Pseudomonadota</taxon>
        <taxon>Gammaproteobacteria</taxon>
        <taxon>Pseudomonadales</taxon>
        <taxon>Pseudomonadaceae</taxon>
        <taxon>Pseudomonas</taxon>
    </lineage>
</organism>
<sequence>MTELARLKFYATQPHSCSYLPDEQATTLFLDPSQPMDVNVYADLSEMGFRRSGDHLYRPHCQNCNACVPARIPAARFIPNRQQRRILKRNADLTVTAARPAFKEEYFELYRRYIETRHADGDMYPPSRDQFSTFLVRDLPFCWFYEFRLEGHLMAVAVCDLLPNGLSAVYTFYEPDEERRSLGRFAILWQITEALRQDLEAVYLGYWIKNCKKMNYKTQYRPIELLINQRWVTLN</sequence>
<keyword id="KW-0012">Acyltransferase</keyword>
<keyword id="KW-0963">Cytoplasm</keyword>
<keyword id="KW-0808">Transferase</keyword>
<gene>
    <name evidence="1" type="primary">bpt</name>
    <name type="ordered locus">PputGB1_3611</name>
</gene>
<name>BPT_PSEPG</name>
<protein>
    <recommendedName>
        <fullName evidence="1">Aspartate/glutamate leucyltransferase</fullName>
        <ecNumber evidence="1">2.3.2.29</ecNumber>
    </recommendedName>
</protein>
<evidence type="ECO:0000255" key="1">
    <source>
        <dbReference type="HAMAP-Rule" id="MF_00689"/>
    </source>
</evidence>